<protein>
    <recommendedName>
        <fullName evidence="1">UPF0229 protein BCG9842_B4751</fullName>
    </recommendedName>
</protein>
<sequence length="391" mass="45346">MGEENQPNYTISQENWSLHRKGYDDQQRHQEKVQEAIKNNLPDLVTEESIVMSNGKDVVKIPIRSLDEYKIRYNYDKNKHVGQGNGDSKVGDVVARDGSGGQKQKGPGKGQGAGDAAGEDYYEAEVSILELEQAFFRELELPNLKRKEIDENRIEHVEFNDIRKTGLWGNIDKKRTMISAYKRNAMRGKASFHPIHQEDLKFRTWNEVLKPDSKAVVLAMMDTSGSMGMWEKYMARSFFFWMTRFLRTKYETVDIEFIAHHTEAKVVTEEEFFSKGESGGTICSSVYKKALELIDNKYSPDRYNIYPFHFSDGDNLTSDNARCVKLVEELMKKCNMFGYGEVNQYNRHSTLMSAYKNIKDENFRYYILKQKADVFHAMKSFFREESGEKMA</sequence>
<name>Y4751_BACC2</name>
<comment type="similarity">
    <text evidence="1">Belongs to the UPF0229 family.</text>
</comment>
<organism>
    <name type="scientific">Bacillus cereus (strain G9842)</name>
    <dbReference type="NCBI Taxonomy" id="405531"/>
    <lineage>
        <taxon>Bacteria</taxon>
        <taxon>Bacillati</taxon>
        <taxon>Bacillota</taxon>
        <taxon>Bacilli</taxon>
        <taxon>Bacillales</taxon>
        <taxon>Bacillaceae</taxon>
        <taxon>Bacillus</taxon>
        <taxon>Bacillus cereus group</taxon>
    </lineage>
</organism>
<dbReference type="EMBL" id="CP001186">
    <property type="protein sequence ID" value="ACK95927.1"/>
    <property type="molecule type" value="Genomic_DNA"/>
</dbReference>
<dbReference type="KEGG" id="bcg:BCG9842_B4751"/>
<dbReference type="HOGENOM" id="CLU_049702_2_0_9"/>
<dbReference type="Proteomes" id="UP000006744">
    <property type="component" value="Chromosome"/>
</dbReference>
<dbReference type="HAMAP" id="MF_01232">
    <property type="entry name" value="UPF0229"/>
    <property type="match status" value="1"/>
</dbReference>
<dbReference type="InterPro" id="IPR014230">
    <property type="entry name" value="Spore_YhbH"/>
</dbReference>
<dbReference type="InterPro" id="IPR006698">
    <property type="entry name" value="UPF0229"/>
</dbReference>
<dbReference type="NCBIfam" id="TIGR02877">
    <property type="entry name" value="spore_yhbH"/>
    <property type="match status" value="1"/>
</dbReference>
<dbReference type="PANTHER" id="PTHR30510">
    <property type="entry name" value="UPF0229 PROTEIN YEAH"/>
    <property type="match status" value="1"/>
</dbReference>
<dbReference type="PANTHER" id="PTHR30510:SF2">
    <property type="entry name" value="UPF0229 PROTEIN YEAH"/>
    <property type="match status" value="1"/>
</dbReference>
<dbReference type="Pfam" id="PF04285">
    <property type="entry name" value="DUF444"/>
    <property type="match status" value="2"/>
</dbReference>
<gene>
    <name type="ordered locus">BCG9842_B4751</name>
</gene>
<reference key="1">
    <citation type="submission" date="2008-10" db="EMBL/GenBank/DDBJ databases">
        <title>Genome sequence of Bacillus cereus G9842.</title>
        <authorList>
            <person name="Dodson R.J."/>
            <person name="Durkin A.S."/>
            <person name="Rosovitz M.J."/>
            <person name="Rasko D.A."/>
            <person name="Hoffmaster A."/>
            <person name="Ravel J."/>
            <person name="Sutton G."/>
        </authorList>
    </citation>
    <scope>NUCLEOTIDE SEQUENCE [LARGE SCALE GENOMIC DNA]</scope>
    <source>
        <strain>G9842</strain>
    </source>
</reference>
<proteinExistence type="inferred from homology"/>
<feature type="chain" id="PRO_1000139633" description="UPF0229 protein BCG9842_B4751">
    <location>
        <begin position="1"/>
        <end position="391"/>
    </location>
</feature>
<feature type="region of interest" description="Disordered" evidence="2">
    <location>
        <begin position="1"/>
        <end position="31"/>
    </location>
</feature>
<feature type="region of interest" description="Disordered" evidence="2">
    <location>
        <begin position="80"/>
        <end position="117"/>
    </location>
</feature>
<feature type="compositionally biased region" description="Polar residues" evidence="2">
    <location>
        <begin position="1"/>
        <end position="16"/>
    </location>
</feature>
<feature type="compositionally biased region" description="Basic and acidic residues" evidence="2">
    <location>
        <begin position="21"/>
        <end position="31"/>
    </location>
</feature>
<feature type="compositionally biased region" description="Gly residues" evidence="2">
    <location>
        <begin position="98"/>
        <end position="115"/>
    </location>
</feature>
<accession>B7IWS7</accession>
<evidence type="ECO:0000255" key="1">
    <source>
        <dbReference type="HAMAP-Rule" id="MF_01232"/>
    </source>
</evidence>
<evidence type="ECO:0000256" key="2">
    <source>
        <dbReference type="SAM" id="MobiDB-lite"/>
    </source>
</evidence>